<feature type="chain" id="PRO_0000106799" description="Uncharacterized protein MJ0330">
    <location>
        <begin position="1"/>
        <end position="549"/>
    </location>
</feature>
<protein>
    <recommendedName>
        <fullName>Uncharacterized protein MJ0330</fullName>
    </recommendedName>
</protein>
<gene>
    <name type="ordered locus">MJ0330</name>
</gene>
<proteinExistence type="predicted"/>
<sequence length="549" mass="64471">MMYIVELVRESLKKKTFNKKIFLELCKKLDIPIPQKLNKHNFPPLFYELIDKLKSLNIIEFCEITMDLHTITEKQKEILLNMVEHPINILIIGKGGGKDFMVSLLFNYMMFRACVEDYYEKFTRIDFVNVAPNDHLAKNVFFKEFKAWFLKCKVWQMIGIDKKKRQKAPICVLETKAEIGDKITMHSGHSRATSFEGMNALCVVADEISDPDFKNAEQLFEQGLSSAKSRFKDKARVVAITWTRFPTPNPRDDVGYRLYLDYKAVDEAYTFKGKTWEVNTRVSKEDFKAQYQKNPILARCMYECEPPELNAYFISLEALEARHKVEMGLFTWRAIYENNLIRLEFKQLQSTDKTIYCHTDLAINRDKGVIAISYFDKGKVIISDIIVLTPTLGHKIDYLSLEKFYNHLQNHFSVKFTFDRFQSEYFIQKFKGERLSKHVKLWTTFQELVEGTKEYYDATGVKRKKAKIEIRCNEDIWQKLRTQILQHQIDGDKVIYFGEGSPDLADAVVSSAYNCITHNVNAIDEEDYSYRQVFDDEEEFEEFEFGSFF</sequence>
<dbReference type="EMBL" id="L77117">
    <property type="protein sequence ID" value="AAB98318.1"/>
    <property type="molecule type" value="Genomic_DNA"/>
</dbReference>
<dbReference type="PIR" id="B64341">
    <property type="entry name" value="B64341"/>
</dbReference>
<dbReference type="FunCoup" id="Q57776">
    <property type="interactions" value="7"/>
</dbReference>
<dbReference type="STRING" id="243232.MJ_0330"/>
<dbReference type="PaxDb" id="243232-MJ_0330"/>
<dbReference type="EnsemblBacteria" id="AAB98318">
    <property type="protein sequence ID" value="AAB98318"/>
    <property type="gene ID" value="MJ_0330"/>
</dbReference>
<dbReference type="KEGG" id="mja:MJ_0330"/>
<dbReference type="eggNOG" id="arCOG09550">
    <property type="taxonomic scope" value="Archaea"/>
</dbReference>
<dbReference type="HOGENOM" id="CLU_512539_0_0_2"/>
<dbReference type="InParanoid" id="Q57776"/>
<dbReference type="Proteomes" id="UP000000805">
    <property type="component" value="Chromosome"/>
</dbReference>
<dbReference type="Gene3D" id="3.40.50.300">
    <property type="entry name" value="P-loop containing nucleotide triphosphate hydrolases"/>
    <property type="match status" value="1"/>
</dbReference>
<dbReference type="InterPro" id="IPR027417">
    <property type="entry name" value="P-loop_NTPase"/>
</dbReference>
<keyword id="KW-1185">Reference proteome</keyword>
<name>Y330_METJA</name>
<accession>Q57776</accession>
<organism>
    <name type="scientific">Methanocaldococcus jannaschii (strain ATCC 43067 / DSM 2661 / JAL-1 / JCM 10045 / NBRC 100440)</name>
    <name type="common">Methanococcus jannaschii</name>
    <dbReference type="NCBI Taxonomy" id="243232"/>
    <lineage>
        <taxon>Archaea</taxon>
        <taxon>Methanobacteriati</taxon>
        <taxon>Methanobacteriota</taxon>
        <taxon>Methanomada group</taxon>
        <taxon>Methanococci</taxon>
        <taxon>Methanococcales</taxon>
        <taxon>Methanocaldococcaceae</taxon>
        <taxon>Methanocaldococcus</taxon>
    </lineage>
</organism>
<reference key="1">
    <citation type="journal article" date="1996" name="Science">
        <title>Complete genome sequence of the methanogenic archaeon, Methanococcus jannaschii.</title>
        <authorList>
            <person name="Bult C.J."/>
            <person name="White O."/>
            <person name="Olsen G.J."/>
            <person name="Zhou L."/>
            <person name="Fleischmann R.D."/>
            <person name="Sutton G.G."/>
            <person name="Blake J.A."/>
            <person name="FitzGerald L.M."/>
            <person name="Clayton R.A."/>
            <person name="Gocayne J.D."/>
            <person name="Kerlavage A.R."/>
            <person name="Dougherty B.A."/>
            <person name="Tomb J.-F."/>
            <person name="Adams M.D."/>
            <person name="Reich C.I."/>
            <person name="Overbeek R."/>
            <person name="Kirkness E.F."/>
            <person name="Weinstock K.G."/>
            <person name="Merrick J.M."/>
            <person name="Glodek A."/>
            <person name="Scott J.L."/>
            <person name="Geoghagen N.S.M."/>
            <person name="Weidman J.F."/>
            <person name="Fuhrmann J.L."/>
            <person name="Nguyen D."/>
            <person name="Utterback T.R."/>
            <person name="Kelley J.M."/>
            <person name="Peterson J.D."/>
            <person name="Sadow P.W."/>
            <person name="Hanna M.C."/>
            <person name="Cotton M.D."/>
            <person name="Roberts K.M."/>
            <person name="Hurst M.A."/>
            <person name="Kaine B.P."/>
            <person name="Borodovsky M."/>
            <person name="Klenk H.-P."/>
            <person name="Fraser C.M."/>
            <person name="Smith H.O."/>
            <person name="Woese C.R."/>
            <person name="Venter J.C."/>
        </authorList>
    </citation>
    <scope>NUCLEOTIDE SEQUENCE [LARGE SCALE GENOMIC DNA]</scope>
    <source>
        <strain>ATCC 43067 / DSM 2661 / JAL-1 / JCM 10045 / NBRC 100440</strain>
    </source>
</reference>